<protein>
    <recommendedName>
        <fullName evidence="1">Anhydro-N-acetylmuramic acid kinase</fullName>
        <ecNumber evidence="1">2.7.1.170</ecNumber>
    </recommendedName>
    <alternativeName>
        <fullName evidence="1">AnhMurNAc kinase</fullName>
    </alternativeName>
</protein>
<evidence type="ECO:0000255" key="1">
    <source>
        <dbReference type="HAMAP-Rule" id="MF_01270"/>
    </source>
</evidence>
<sequence>MKSGRYIGVMSGTSLDGVDVVMAVIDENMVAQQARYHHPMPQALRQQILAVCQGQSLTLSQLGQLDTRLGRLFAEAVLALLKQQGLSGEEITAIGCHGQTVWHEPQGEAPNTLQIGDNNQIAALTGITVVGDFRRRDMALGGQGAPLVPAFHHAVLMHPAERRMVLNIGGIANLSLLLPGRELRGFDTGPGNMLLDAWIWRQQGKAYDKDGAWGAGGQIVWPLLKQMLSDPYFALSAPKSTGREYFNLGWLEQQLHSFPGLPAQDVQATLTELTATTIAQQVLLSGGCDRLLVCGGGGKNQLLMTRLAAQLAGIEVTSTDKAGISGDDMEALAFAWLAWRTLSGLPGNLPSVTGARAASVIGAIYPANRSLPL</sequence>
<name>ANMK_ERWT9</name>
<dbReference type="EC" id="2.7.1.170" evidence="1"/>
<dbReference type="EMBL" id="CU468135">
    <property type="protein sequence ID" value="CAO96835.1"/>
    <property type="molecule type" value="Genomic_DNA"/>
</dbReference>
<dbReference type="RefSeq" id="WP_012441524.1">
    <property type="nucleotide sequence ID" value="NC_010694.1"/>
</dbReference>
<dbReference type="SMR" id="B2VEN5"/>
<dbReference type="STRING" id="465817.ETA_17890"/>
<dbReference type="KEGG" id="eta:ETA_17890"/>
<dbReference type="eggNOG" id="COG2377">
    <property type="taxonomic scope" value="Bacteria"/>
</dbReference>
<dbReference type="HOGENOM" id="CLU_038782_0_0_6"/>
<dbReference type="OrthoDB" id="9763949at2"/>
<dbReference type="UniPathway" id="UPA00343"/>
<dbReference type="UniPathway" id="UPA00544"/>
<dbReference type="Proteomes" id="UP000001726">
    <property type="component" value="Chromosome"/>
</dbReference>
<dbReference type="GO" id="GO:0005524">
    <property type="term" value="F:ATP binding"/>
    <property type="evidence" value="ECO:0007669"/>
    <property type="project" value="UniProtKB-UniRule"/>
</dbReference>
<dbReference type="GO" id="GO:0016301">
    <property type="term" value="F:kinase activity"/>
    <property type="evidence" value="ECO:0007669"/>
    <property type="project" value="UniProtKB-KW"/>
</dbReference>
<dbReference type="GO" id="GO:0016773">
    <property type="term" value="F:phosphotransferase activity, alcohol group as acceptor"/>
    <property type="evidence" value="ECO:0007669"/>
    <property type="project" value="UniProtKB-UniRule"/>
</dbReference>
<dbReference type="GO" id="GO:0097175">
    <property type="term" value="P:1,6-anhydro-N-acetyl-beta-muramic acid catabolic process"/>
    <property type="evidence" value="ECO:0007669"/>
    <property type="project" value="UniProtKB-UniRule"/>
</dbReference>
<dbReference type="GO" id="GO:0006040">
    <property type="term" value="P:amino sugar metabolic process"/>
    <property type="evidence" value="ECO:0007669"/>
    <property type="project" value="InterPro"/>
</dbReference>
<dbReference type="GO" id="GO:0009254">
    <property type="term" value="P:peptidoglycan turnover"/>
    <property type="evidence" value="ECO:0007669"/>
    <property type="project" value="UniProtKB-UniRule"/>
</dbReference>
<dbReference type="CDD" id="cd24050">
    <property type="entry name" value="ASKHA_NBD_ANMK"/>
    <property type="match status" value="1"/>
</dbReference>
<dbReference type="Gene3D" id="3.30.420.40">
    <property type="match status" value="2"/>
</dbReference>
<dbReference type="HAMAP" id="MF_01270">
    <property type="entry name" value="AnhMurNAc_kinase"/>
    <property type="match status" value="1"/>
</dbReference>
<dbReference type="InterPro" id="IPR005338">
    <property type="entry name" value="Anhydro_N_Ac-Mur_kinase"/>
</dbReference>
<dbReference type="InterPro" id="IPR043129">
    <property type="entry name" value="ATPase_NBD"/>
</dbReference>
<dbReference type="NCBIfam" id="NF007138">
    <property type="entry name" value="PRK09585.1-1"/>
    <property type="match status" value="1"/>
</dbReference>
<dbReference type="NCBIfam" id="NF007139">
    <property type="entry name" value="PRK09585.1-3"/>
    <property type="match status" value="1"/>
</dbReference>
<dbReference type="NCBIfam" id="NF007148">
    <property type="entry name" value="PRK09585.3-2"/>
    <property type="match status" value="1"/>
</dbReference>
<dbReference type="PANTHER" id="PTHR30605">
    <property type="entry name" value="ANHYDRO-N-ACETYLMURAMIC ACID KINASE"/>
    <property type="match status" value="1"/>
</dbReference>
<dbReference type="PANTHER" id="PTHR30605:SF0">
    <property type="entry name" value="ANHYDRO-N-ACETYLMURAMIC ACID KINASE"/>
    <property type="match status" value="1"/>
</dbReference>
<dbReference type="Pfam" id="PF03702">
    <property type="entry name" value="AnmK"/>
    <property type="match status" value="1"/>
</dbReference>
<dbReference type="SUPFAM" id="SSF53067">
    <property type="entry name" value="Actin-like ATPase domain"/>
    <property type="match status" value="1"/>
</dbReference>
<feature type="chain" id="PRO_1000140161" description="Anhydro-N-acetylmuramic acid kinase">
    <location>
        <begin position="1"/>
        <end position="373"/>
    </location>
</feature>
<feature type="binding site" evidence="1">
    <location>
        <begin position="12"/>
        <end position="19"/>
    </location>
    <ligand>
        <name>ATP</name>
        <dbReference type="ChEBI" id="CHEBI:30616"/>
    </ligand>
</feature>
<proteinExistence type="inferred from homology"/>
<keyword id="KW-0067">ATP-binding</keyword>
<keyword id="KW-0119">Carbohydrate metabolism</keyword>
<keyword id="KW-0418">Kinase</keyword>
<keyword id="KW-0547">Nucleotide-binding</keyword>
<keyword id="KW-1185">Reference proteome</keyword>
<keyword id="KW-0808">Transferase</keyword>
<accession>B2VEN5</accession>
<organism>
    <name type="scientific">Erwinia tasmaniensis (strain DSM 17950 / CFBP 7177 / CIP 109463 / NCPPB 4357 / Et1/99)</name>
    <dbReference type="NCBI Taxonomy" id="465817"/>
    <lineage>
        <taxon>Bacteria</taxon>
        <taxon>Pseudomonadati</taxon>
        <taxon>Pseudomonadota</taxon>
        <taxon>Gammaproteobacteria</taxon>
        <taxon>Enterobacterales</taxon>
        <taxon>Erwiniaceae</taxon>
        <taxon>Erwinia</taxon>
    </lineage>
</organism>
<comment type="function">
    <text evidence="1">Catalyzes the specific phosphorylation of 1,6-anhydro-N-acetylmuramic acid (anhMurNAc) with the simultaneous cleavage of the 1,6-anhydro ring, generating MurNAc-6-P. Is required for the utilization of anhMurNAc either imported from the medium or derived from its own cell wall murein, and thus plays a role in cell wall recycling.</text>
</comment>
<comment type="catalytic activity">
    <reaction evidence="1">
        <text>1,6-anhydro-N-acetyl-beta-muramate + ATP + H2O = N-acetyl-D-muramate 6-phosphate + ADP + H(+)</text>
        <dbReference type="Rhea" id="RHEA:24952"/>
        <dbReference type="ChEBI" id="CHEBI:15377"/>
        <dbReference type="ChEBI" id="CHEBI:15378"/>
        <dbReference type="ChEBI" id="CHEBI:30616"/>
        <dbReference type="ChEBI" id="CHEBI:58690"/>
        <dbReference type="ChEBI" id="CHEBI:58722"/>
        <dbReference type="ChEBI" id="CHEBI:456216"/>
        <dbReference type="EC" id="2.7.1.170"/>
    </reaction>
</comment>
<comment type="pathway">
    <text evidence="1">Amino-sugar metabolism; 1,6-anhydro-N-acetylmuramate degradation.</text>
</comment>
<comment type="pathway">
    <text evidence="1">Cell wall biogenesis; peptidoglycan recycling.</text>
</comment>
<comment type="similarity">
    <text evidence="1">Belongs to the anhydro-N-acetylmuramic acid kinase family.</text>
</comment>
<reference key="1">
    <citation type="journal article" date="2008" name="Environ. Microbiol.">
        <title>The genome of Erwinia tasmaniensis strain Et1/99, a non-pathogenic bacterium in the genus Erwinia.</title>
        <authorList>
            <person name="Kube M."/>
            <person name="Migdoll A.M."/>
            <person name="Mueller I."/>
            <person name="Kuhl H."/>
            <person name="Beck A."/>
            <person name="Reinhardt R."/>
            <person name="Geider K."/>
        </authorList>
    </citation>
    <scope>NUCLEOTIDE SEQUENCE [LARGE SCALE GENOMIC DNA]</scope>
    <source>
        <strain>DSM 17950 / CFBP 7177 / CIP 109463 / NCPPB 4357 / Et1/99</strain>
    </source>
</reference>
<gene>
    <name evidence="1" type="primary">anmK</name>
    <name type="ordered locus">ETA_17890</name>
</gene>